<dbReference type="EC" id="4.1.99.1" evidence="1"/>
<dbReference type="EMBL" id="CP000057">
    <property type="protein sequence ID" value="AAX87733.1"/>
    <property type="molecule type" value="Genomic_DNA"/>
</dbReference>
<dbReference type="RefSeq" id="WP_011272181.1">
    <property type="nucleotide sequence ID" value="NC_007146.2"/>
</dbReference>
<dbReference type="SMR" id="Q4QML4"/>
<dbReference type="KEGG" id="hit:NTHI0831"/>
<dbReference type="HOGENOM" id="CLU_047223_0_0_6"/>
<dbReference type="UniPathway" id="UPA00332">
    <property type="reaction ID" value="UER00452"/>
</dbReference>
<dbReference type="Proteomes" id="UP000002525">
    <property type="component" value="Chromosome"/>
</dbReference>
<dbReference type="GO" id="GO:0009034">
    <property type="term" value="F:tryptophanase activity"/>
    <property type="evidence" value="ECO:0007669"/>
    <property type="project" value="UniProtKB-UniRule"/>
</dbReference>
<dbReference type="Gene3D" id="3.90.1150.10">
    <property type="entry name" value="Aspartate Aminotransferase, domain 1"/>
    <property type="match status" value="1"/>
</dbReference>
<dbReference type="Gene3D" id="3.40.640.10">
    <property type="entry name" value="Type I PLP-dependent aspartate aminotransferase-like (Major domain)"/>
    <property type="match status" value="1"/>
</dbReference>
<dbReference type="HAMAP" id="MF_00544">
    <property type="entry name" value="Tryptophanase"/>
    <property type="match status" value="1"/>
</dbReference>
<dbReference type="InterPro" id="IPR001597">
    <property type="entry name" value="ArAA_b-elim_lyase/Thr_aldolase"/>
</dbReference>
<dbReference type="InterPro" id="IPR011166">
    <property type="entry name" value="Beta-eliminating_lyase"/>
</dbReference>
<dbReference type="InterPro" id="IPR015424">
    <property type="entry name" value="PyrdxlP-dep_Trfase"/>
</dbReference>
<dbReference type="InterPro" id="IPR015421">
    <property type="entry name" value="PyrdxlP-dep_Trfase_major"/>
</dbReference>
<dbReference type="InterPro" id="IPR015422">
    <property type="entry name" value="PyrdxlP-dep_Trfase_small"/>
</dbReference>
<dbReference type="InterPro" id="IPR013440">
    <property type="entry name" value="TNase"/>
</dbReference>
<dbReference type="InterPro" id="IPR018176">
    <property type="entry name" value="Tryptophanase_CS"/>
</dbReference>
<dbReference type="NCBIfam" id="NF009709">
    <property type="entry name" value="PRK13238.1"/>
    <property type="match status" value="1"/>
</dbReference>
<dbReference type="NCBIfam" id="TIGR02617">
    <property type="entry name" value="tnaA_trp_ase"/>
    <property type="match status" value="1"/>
</dbReference>
<dbReference type="PANTHER" id="PTHR32325">
    <property type="entry name" value="BETA-ELIMINATING LYASE-LIKE PROTEIN-RELATED"/>
    <property type="match status" value="1"/>
</dbReference>
<dbReference type="PANTHER" id="PTHR32325:SF4">
    <property type="entry name" value="TRYPTOPHANASE"/>
    <property type="match status" value="1"/>
</dbReference>
<dbReference type="Pfam" id="PF01212">
    <property type="entry name" value="Beta_elim_lyase"/>
    <property type="match status" value="1"/>
</dbReference>
<dbReference type="PIRSF" id="PIRSF001386">
    <property type="entry name" value="Trpase"/>
    <property type="match status" value="1"/>
</dbReference>
<dbReference type="SUPFAM" id="SSF53383">
    <property type="entry name" value="PLP-dependent transferases"/>
    <property type="match status" value="1"/>
</dbReference>
<dbReference type="PROSITE" id="PS00853">
    <property type="entry name" value="BETA_ELIM_LYASE"/>
    <property type="match status" value="1"/>
</dbReference>
<keyword id="KW-0456">Lyase</keyword>
<keyword id="KW-0663">Pyridoxal phosphate</keyword>
<keyword id="KW-0823">Tryptophan catabolism</keyword>
<proteinExistence type="inferred from homology"/>
<accession>Q4QML4</accession>
<name>TNAA_HAEI8</name>
<organism>
    <name type="scientific">Haemophilus influenzae (strain 86-028NP)</name>
    <dbReference type="NCBI Taxonomy" id="281310"/>
    <lineage>
        <taxon>Bacteria</taxon>
        <taxon>Pseudomonadati</taxon>
        <taxon>Pseudomonadota</taxon>
        <taxon>Gammaproteobacteria</taxon>
        <taxon>Pasteurellales</taxon>
        <taxon>Pasteurellaceae</taxon>
        <taxon>Haemophilus</taxon>
    </lineage>
</organism>
<feature type="chain" id="PRO_1000017731" description="Tryptophanase">
    <location>
        <begin position="1"/>
        <end position="472"/>
    </location>
</feature>
<feature type="modified residue" description="N6-(pyridoxal phosphate)lysine" evidence="1">
    <location>
        <position position="270"/>
    </location>
</feature>
<reference key="1">
    <citation type="journal article" date="2005" name="J. Bacteriol.">
        <title>Genomic sequence of an otitis media isolate of nontypeable Haemophilus influenzae: comparative study with H. influenzae serotype d, strain KW20.</title>
        <authorList>
            <person name="Harrison A."/>
            <person name="Dyer D.W."/>
            <person name="Gillaspy A."/>
            <person name="Ray W.C."/>
            <person name="Mungur R."/>
            <person name="Carson M.B."/>
            <person name="Zhong H."/>
            <person name="Gipson J."/>
            <person name="Gipson M."/>
            <person name="Johnson L.S."/>
            <person name="Lewis L."/>
            <person name="Bakaletz L.O."/>
            <person name="Munson R.S. Jr."/>
        </authorList>
    </citation>
    <scope>NUCLEOTIDE SEQUENCE [LARGE SCALE GENOMIC DNA]</scope>
    <source>
        <strain>86-028NP</strain>
    </source>
</reference>
<protein>
    <recommendedName>
        <fullName evidence="1">Tryptophanase</fullName>
        <ecNumber evidence="1">4.1.99.1</ecNumber>
    </recommendedName>
    <alternativeName>
        <fullName evidence="1">L-tryptophan indole-lyase</fullName>
        <shortName evidence="1">TNase</shortName>
    </alternativeName>
</protein>
<comment type="catalytic activity">
    <reaction evidence="1">
        <text>L-tryptophan + H2O = indole + pyruvate + NH4(+)</text>
        <dbReference type="Rhea" id="RHEA:19553"/>
        <dbReference type="ChEBI" id="CHEBI:15361"/>
        <dbReference type="ChEBI" id="CHEBI:15377"/>
        <dbReference type="ChEBI" id="CHEBI:16881"/>
        <dbReference type="ChEBI" id="CHEBI:28938"/>
        <dbReference type="ChEBI" id="CHEBI:57912"/>
        <dbReference type="EC" id="4.1.99.1"/>
    </reaction>
</comment>
<comment type="cofactor">
    <cofactor evidence="1">
        <name>pyridoxal 5'-phosphate</name>
        <dbReference type="ChEBI" id="CHEBI:597326"/>
    </cofactor>
</comment>
<comment type="pathway">
    <text evidence="1">Amino-acid degradation; L-tryptophan degradation via pyruvate pathway; indole and pyruvate from L-tryptophan: step 1/1.</text>
</comment>
<comment type="subunit">
    <text evidence="1">Homotetramer.</text>
</comment>
<comment type="similarity">
    <text evidence="1">Belongs to the beta-eliminating lyase family.</text>
</comment>
<evidence type="ECO:0000255" key="1">
    <source>
        <dbReference type="HAMAP-Rule" id="MF_00544"/>
    </source>
</evidence>
<gene>
    <name evidence="1" type="primary">tnaA</name>
    <name type="ordered locus">NTHI0831</name>
</gene>
<sequence>MENFKHLPEPFRIRVIEPVKRTTREYREQAMLKSGMNPFLLDSEDIFIDLLTDSGTGAVTQDMQAAMLRGDEAYSGSRSYYALAKAVKDIFGYEYTIPTHQGRGAEQIYIPVLIAKREREKGLDRSKMVVFSNYFFDTTQGHSQINGATVRNVYIKEAFDTTAKHPFKGNFDLEKLEKGIQEAGAHNVPYIVCTITCNSAGGQPVSIANLKGMYEIARKYDIPVIMDSARFAENAYFVQQREEAYKDWTIEQITYESYRYADGLAMSAKKDAMVPMGGILAFKDKSMEEVYHECRTLCVVQEGFPTYGGLEGGAMERLAVGLHDGMRQEWLAYRIAQIEYLVAGLEKIGVPCQQPGGHAAFVDAGKLLPHIPADQFPAQALSCELYKVAGIRAVEIGSFLLGRDPKTGKQLPCPAELLRLTIPRATYTQTHMDFIIEAFQKVKENAENIKGLTFTYEPKVLRHFTARLKEVE</sequence>